<keyword id="KW-0963">Cytoplasm</keyword>
<keyword id="KW-0378">Hydrolase</keyword>
<keyword id="KW-1185">Reference proteome</keyword>
<protein>
    <recommendedName>
        <fullName evidence="1">Urease subunit beta</fullName>
        <ecNumber evidence="1">3.5.1.5</ecNumber>
    </recommendedName>
    <alternativeName>
        <fullName evidence="1">Urea amidohydrolase subunit beta</fullName>
    </alternativeName>
</protein>
<feature type="chain" id="PRO_0000234256" description="Urease subunit beta">
    <location>
        <begin position="1"/>
        <end position="105"/>
    </location>
</feature>
<proteinExistence type="inferred from homology"/>
<gene>
    <name evidence="1" type="primary">ureB</name>
    <name type="ordered locus">PMT_2235</name>
</gene>
<sequence>MPPLIPGELIPEPGTLELNSNRPTLTLRVANSGDRPIQVGSHFHFFETNTALHFDRDAARGHRLDIPAGTAIRFEPGDERDVRLVALAGHRKVFGFNGLVNGPLD</sequence>
<comment type="catalytic activity">
    <reaction evidence="1">
        <text>urea + 2 H2O + H(+) = hydrogencarbonate + 2 NH4(+)</text>
        <dbReference type="Rhea" id="RHEA:20557"/>
        <dbReference type="ChEBI" id="CHEBI:15377"/>
        <dbReference type="ChEBI" id="CHEBI:15378"/>
        <dbReference type="ChEBI" id="CHEBI:16199"/>
        <dbReference type="ChEBI" id="CHEBI:17544"/>
        <dbReference type="ChEBI" id="CHEBI:28938"/>
        <dbReference type="EC" id="3.5.1.5"/>
    </reaction>
</comment>
<comment type="pathway">
    <text evidence="1">Nitrogen metabolism; urea degradation; CO(2) and NH(3) from urea (urease route): step 1/1.</text>
</comment>
<comment type="subunit">
    <text evidence="1">Heterotrimer of UreA (gamma), UreB (beta) and UreC (alpha) subunits. Three heterotrimers associate to form the active enzyme.</text>
</comment>
<comment type="subcellular location">
    <subcellularLocation>
        <location evidence="1">Cytoplasm</location>
    </subcellularLocation>
</comment>
<comment type="similarity">
    <text evidence="1">Belongs to the urease beta subunit family.</text>
</comment>
<dbReference type="EC" id="3.5.1.5" evidence="1"/>
<dbReference type="EMBL" id="BX548175">
    <property type="protein sequence ID" value="CAE22409.1"/>
    <property type="molecule type" value="Genomic_DNA"/>
</dbReference>
<dbReference type="RefSeq" id="WP_011131599.1">
    <property type="nucleotide sequence ID" value="NC_005071.1"/>
</dbReference>
<dbReference type="SMR" id="Q7V3V3"/>
<dbReference type="KEGG" id="pmt:PMT_2235"/>
<dbReference type="eggNOG" id="COG0832">
    <property type="taxonomic scope" value="Bacteria"/>
</dbReference>
<dbReference type="HOGENOM" id="CLU_129707_1_1_3"/>
<dbReference type="OrthoDB" id="9797217at2"/>
<dbReference type="UniPathway" id="UPA00258">
    <property type="reaction ID" value="UER00370"/>
</dbReference>
<dbReference type="Proteomes" id="UP000001423">
    <property type="component" value="Chromosome"/>
</dbReference>
<dbReference type="GO" id="GO:0035550">
    <property type="term" value="C:urease complex"/>
    <property type="evidence" value="ECO:0007669"/>
    <property type="project" value="InterPro"/>
</dbReference>
<dbReference type="GO" id="GO:0009039">
    <property type="term" value="F:urease activity"/>
    <property type="evidence" value="ECO:0007669"/>
    <property type="project" value="UniProtKB-UniRule"/>
</dbReference>
<dbReference type="GO" id="GO:0043419">
    <property type="term" value="P:urea catabolic process"/>
    <property type="evidence" value="ECO:0007669"/>
    <property type="project" value="UniProtKB-UniRule"/>
</dbReference>
<dbReference type="CDD" id="cd00407">
    <property type="entry name" value="Urease_beta"/>
    <property type="match status" value="1"/>
</dbReference>
<dbReference type="FunFam" id="2.10.150.10:FF:000001">
    <property type="entry name" value="Urease subunit beta"/>
    <property type="match status" value="1"/>
</dbReference>
<dbReference type="Gene3D" id="2.10.150.10">
    <property type="entry name" value="Urease, beta subunit"/>
    <property type="match status" value="1"/>
</dbReference>
<dbReference type="HAMAP" id="MF_01954">
    <property type="entry name" value="Urease_beta"/>
    <property type="match status" value="1"/>
</dbReference>
<dbReference type="InterPro" id="IPR002019">
    <property type="entry name" value="Urease_beta-like"/>
</dbReference>
<dbReference type="InterPro" id="IPR036461">
    <property type="entry name" value="Urease_betasu_sf"/>
</dbReference>
<dbReference type="InterPro" id="IPR050069">
    <property type="entry name" value="Urease_subunit"/>
</dbReference>
<dbReference type="NCBIfam" id="NF009682">
    <property type="entry name" value="PRK13203.1"/>
    <property type="match status" value="1"/>
</dbReference>
<dbReference type="NCBIfam" id="TIGR00192">
    <property type="entry name" value="urease_beta"/>
    <property type="match status" value="1"/>
</dbReference>
<dbReference type="PANTHER" id="PTHR33569">
    <property type="entry name" value="UREASE"/>
    <property type="match status" value="1"/>
</dbReference>
<dbReference type="PANTHER" id="PTHR33569:SF1">
    <property type="entry name" value="UREASE"/>
    <property type="match status" value="1"/>
</dbReference>
<dbReference type="Pfam" id="PF00699">
    <property type="entry name" value="Urease_beta"/>
    <property type="match status" value="1"/>
</dbReference>
<dbReference type="SUPFAM" id="SSF51278">
    <property type="entry name" value="Urease, beta-subunit"/>
    <property type="match status" value="1"/>
</dbReference>
<name>URE2_PROMM</name>
<reference key="1">
    <citation type="journal article" date="2003" name="Nature">
        <title>Genome divergence in two Prochlorococcus ecotypes reflects oceanic niche differentiation.</title>
        <authorList>
            <person name="Rocap G."/>
            <person name="Larimer F.W."/>
            <person name="Lamerdin J.E."/>
            <person name="Malfatti S."/>
            <person name="Chain P."/>
            <person name="Ahlgren N.A."/>
            <person name="Arellano A."/>
            <person name="Coleman M."/>
            <person name="Hauser L."/>
            <person name="Hess W.R."/>
            <person name="Johnson Z.I."/>
            <person name="Land M.L."/>
            <person name="Lindell D."/>
            <person name="Post A.F."/>
            <person name="Regala W."/>
            <person name="Shah M."/>
            <person name="Shaw S.L."/>
            <person name="Steglich C."/>
            <person name="Sullivan M.B."/>
            <person name="Ting C.S."/>
            <person name="Tolonen A."/>
            <person name="Webb E.A."/>
            <person name="Zinser E.R."/>
            <person name="Chisholm S.W."/>
        </authorList>
    </citation>
    <scope>NUCLEOTIDE SEQUENCE [LARGE SCALE GENOMIC DNA]</scope>
    <source>
        <strain>MIT 9313</strain>
    </source>
</reference>
<organism>
    <name type="scientific">Prochlorococcus marinus (strain MIT 9313)</name>
    <dbReference type="NCBI Taxonomy" id="74547"/>
    <lineage>
        <taxon>Bacteria</taxon>
        <taxon>Bacillati</taxon>
        <taxon>Cyanobacteriota</taxon>
        <taxon>Cyanophyceae</taxon>
        <taxon>Synechococcales</taxon>
        <taxon>Prochlorococcaceae</taxon>
        <taxon>Prochlorococcus</taxon>
    </lineage>
</organism>
<evidence type="ECO:0000255" key="1">
    <source>
        <dbReference type="HAMAP-Rule" id="MF_01954"/>
    </source>
</evidence>
<accession>Q7V3V3</accession>